<reference key="1">
    <citation type="journal article" date="1999" name="J. Biol. Chem.">
        <title>A novel sulfonylurea receptor family member expressed in the embryonic Drosophila dorsal vessel and tracheal system.</title>
        <authorList>
            <person name="Nasonkin I."/>
            <person name="Alikasifoglu A."/>
            <person name="Ambrose C."/>
            <person name="Cahill P."/>
            <person name="Cheng M."/>
            <person name="Sarniak A."/>
            <person name="Egan M."/>
            <person name="Thomas P.M."/>
        </authorList>
    </citation>
    <scope>NUCLEOTIDE SEQUENCE [MRNA]</scope>
    <scope>FUNCTION</scope>
    <scope>DEVELOPMENTAL STAGE</scope>
</reference>
<reference key="2">
    <citation type="journal article" date="2000" name="Science">
        <title>The genome sequence of Drosophila melanogaster.</title>
        <authorList>
            <person name="Adams M.D."/>
            <person name="Celniker S.E."/>
            <person name="Holt R.A."/>
            <person name="Evans C.A."/>
            <person name="Gocayne J.D."/>
            <person name="Amanatides P.G."/>
            <person name="Scherer S.E."/>
            <person name="Li P.W."/>
            <person name="Hoskins R.A."/>
            <person name="Galle R.F."/>
            <person name="George R.A."/>
            <person name="Lewis S.E."/>
            <person name="Richards S."/>
            <person name="Ashburner M."/>
            <person name="Henderson S.N."/>
            <person name="Sutton G.G."/>
            <person name="Wortman J.R."/>
            <person name="Yandell M.D."/>
            <person name="Zhang Q."/>
            <person name="Chen L.X."/>
            <person name="Brandon R.C."/>
            <person name="Rogers Y.-H.C."/>
            <person name="Blazej R.G."/>
            <person name="Champe M."/>
            <person name="Pfeiffer B.D."/>
            <person name="Wan K.H."/>
            <person name="Doyle C."/>
            <person name="Baxter E.G."/>
            <person name="Helt G."/>
            <person name="Nelson C.R."/>
            <person name="Miklos G.L.G."/>
            <person name="Abril J.F."/>
            <person name="Agbayani A."/>
            <person name="An H.-J."/>
            <person name="Andrews-Pfannkoch C."/>
            <person name="Baldwin D."/>
            <person name="Ballew R.M."/>
            <person name="Basu A."/>
            <person name="Baxendale J."/>
            <person name="Bayraktaroglu L."/>
            <person name="Beasley E.M."/>
            <person name="Beeson K.Y."/>
            <person name="Benos P.V."/>
            <person name="Berman B.P."/>
            <person name="Bhandari D."/>
            <person name="Bolshakov S."/>
            <person name="Borkova D."/>
            <person name="Botchan M.R."/>
            <person name="Bouck J."/>
            <person name="Brokstein P."/>
            <person name="Brottier P."/>
            <person name="Burtis K.C."/>
            <person name="Busam D.A."/>
            <person name="Butler H."/>
            <person name="Cadieu E."/>
            <person name="Center A."/>
            <person name="Chandra I."/>
            <person name="Cherry J.M."/>
            <person name="Cawley S."/>
            <person name="Dahlke C."/>
            <person name="Davenport L.B."/>
            <person name="Davies P."/>
            <person name="de Pablos B."/>
            <person name="Delcher A."/>
            <person name="Deng Z."/>
            <person name="Mays A.D."/>
            <person name="Dew I."/>
            <person name="Dietz S.M."/>
            <person name="Dodson K."/>
            <person name="Doup L.E."/>
            <person name="Downes M."/>
            <person name="Dugan-Rocha S."/>
            <person name="Dunkov B.C."/>
            <person name="Dunn P."/>
            <person name="Durbin K.J."/>
            <person name="Evangelista C.C."/>
            <person name="Ferraz C."/>
            <person name="Ferriera S."/>
            <person name="Fleischmann W."/>
            <person name="Fosler C."/>
            <person name="Gabrielian A.E."/>
            <person name="Garg N.S."/>
            <person name="Gelbart W.M."/>
            <person name="Glasser K."/>
            <person name="Glodek A."/>
            <person name="Gong F."/>
            <person name="Gorrell J.H."/>
            <person name="Gu Z."/>
            <person name="Guan P."/>
            <person name="Harris M."/>
            <person name="Harris N.L."/>
            <person name="Harvey D.A."/>
            <person name="Heiman T.J."/>
            <person name="Hernandez J.R."/>
            <person name="Houck J."/>
            <person name="Hostin D."/>
            <person name="Houston K.A."/>
            <person name="Howland T.J."/>
            <person name="Wei M.-H."/>
            <person name="Ibegwam C."/>
            <person name="Jalali M."/>
            <person name="Kalush F."/>
            <person name="Karpen G.H."/>
            <person name="Ke Z."/>
            <person name="Kennison J.A."/>
            <person name="Ketchum K.A."/>
            <person name="Kimmel B.E."/>
            <person name="Kodira C.D."/>
            <person name="Kraft C.L."/>
            <person name="Kravitz S."/>
            <person name="Kulp D."/>
            <person name="Lai Z."/>
            <person name="Lasko P."/>
            <person name="Lei Y."/>
            <person name="Levitsky A.A."/>
            <person name="Li J.H."/>
            <person name="Li Z."/>
            <person name="Liang Y."/>
            <person name="Lin X."/>
            <person name="Liu X."/>
            <person name="Mattei B."/>
            <person name="McIntosh T.C."/>
            <person name="McLeod M.P."/>
            <person name="McPherson D."/>
            <person name="Merkulov G."/>
            <person name="Milshina N.V."/>
            <person name="Mobarry C."/>
            <person name="Morris J."/>
            <person name="Moshrefi A."/>
            <person name="Mount S.M."/>
            <person name="Moy M."/>
            <person name="Murphy B."/>
            <person name="Murphy L."/>
            <person name="Muzny D.M."/>
            <person name="Nelson D.L."/>
            <person name="Nelson D.R."/>
            <person name="Nelson K.A."/>
            <person name="Nixon K."/>
            <person name="Nusskern D.R."/>
            <person name="Pacleb J.M."/>
            <person name="Palazzolo M."/>
            <person name="Pittman G.S."/>
            <person name="Pan S."/>
            <person name="Pollard J."/>
            <person name="Puri V."/>
            <person name="Reese M.G."/>
            <person name="Reinert K."/>
            <person name="Remington K."/>
            <person name="Saunders R.D.C."/>
            <person name="Scheeler F."/>
            <person name="Shen H."/>
            <person name="Shue B.C."/>
            <person name="Siden-Kiamos I."/>
            <person name="Simpson M."/>
            <person name="Skupski M.P."/>
            <person name="Smith T.J."/>
            <person name="Spier E."/>
            <person name="Spradling A.C."/>
            <person name="Stapleton M."/>
            <person name="Strong R."/>
            <person name="Sun E."/>
            <person name="Svirskas R."/>
            <person name="Tector C."/>
            <person name="Turner R."/>
            <person name="Venter E."/>
            <person name="Wang A.H."/>
            <person name="Wang X."/>
            <person name="Wang Z.-Y."/>
            <person name="Wassarman D.A."/>
            <person name="Weinstock G.M."/>
            <person name="Weissenbach J."/>
            <person name="Williams S.M."/>
            <person name="Woodage T."/>
            <person name="Worley K.C."/>
            <person name="Wu D."/>
            <person name="Yang S."/>
            <person name="Yao Q.A."/>
            <person name="Ye J."/>
            <person name="Yeh R.-F."/>
            <person name="Zaveri J.S."/>
            <person name="Zhan M."/>
            <person name="Zhang G."/>
            <person name="Zhao Q."/>
            <person name="Zheng L."/>
            <person name="Zheng X.H."/>
            <person name="Zhong F.N."/>
            <person name="Zhong W."/>
            <person name="Zhou X."/>
            <person name="Zhu S.C."/>
            <person name="Zhu X."/>
            <person name="Smith H.O."/>
            <person name="Gibbs R.A."/>
            <person name="Myers E.W."/>
            <person name="Rubin G.M."/>
            <person name="Venter J.C."/>
        </authorList>
    </citation>
    <scope>NUCLEOTIDE SEQUENCE [LARGE SCALE GENOMIC DNA]</scope>
    <source>
        <strain>Berkeley</strain>
    </source>
</reference>
<reference key="3">
    <citation type="journal article" date="2002" name="Genome Biol.">
        <title>Annotation of the Drosophila melanogaster euchromatic genome: a systematic review.</title>
        <authorList>
            <person name="Misra S."/>
            <person name="Crosby M.A."/>
            <person name="Mungall C.J."/>
            <person name="Matthews B.B."/>
            <person name="Campbell K.S."/>
            <person name="Hradecky P."/>
            <person name="Huang Y."/>
            <person name="Kaminker J.S."/>
            <person name="Millburn G.H."/>
            <person name="Prochnik S.E."/>
            <person name="Smith C.D."/>
            <person name="Tupy J.L."/>
            <person name="Whitfield E.J."/>
            <person name="Bayraktaroglu L."/>
            <person name="Berman B.P."/>
            <person name="Bettencourt B.R."/>
            <person name="Celniker S.E."/>
            <person name="de Grey A.D.N.J."/>
            <person name="Drysdale R.A."/>
            <person name="Harris N.L."/>
            <person name="Richter J."/>
            <person name="Russo S."/>
            <person name="Schroeder A.J."/>
            <person name="Shu S.Q."/>
            <person name="Stapleton M."/>
            <person name="Yamada C."/>
            <person name="Ashburner M."/>
            <person name="Gelbart W.M."/>
            <person name="Rubin G.M."/>
            <person name="Lewis S.E."/>
        </authorList>
    </citation>
    <scope>GENOME REANNOTATION</scope>
    <source>
        <strain>Berkeley</strain>
    </source>
</reference>
<reference key="4">
    <citation type="journal article" date="2006" name="Proc. Natl. Acad. Sci. U.S.A.">
        <title>The ATP-sensitive potassium (KATP) channel-encoded dSUR gene is required for Drosophila heart function and is regulated by tinman.</title>
        <authorList>
            <person name="Akasaka T."/>
            <person name="Klinedinst S."/>
            <person name="Ocorr K."/>
            <person name="Bustamante E.L."/>
            <person name="Kim S.K."/>
            <person name="Bodmer R."/>
        </authorList>
    </citation>
    <scope>FUNCTION</scope>
    <scope>DEVELOPMENTAL STAGE</scope>
    <scope>TISSUE SPECIFICITY</scope>
</reference>
<reference key="5">
    <citation type="journal article" date="2013" name="Mol. Psychiatry">
        <title>A K(ATP) channel gene effect on sleep duration: from genome-wide association studies to function in Drosophila.</title>
        <authorList>
            <person name="Allebrandt K.V."/>
            <person name="Amin N."/>
            <person name="Muller-Myhsok B."/>
            <person name="Esko T."/>
            <person name="Teder-Laving M."/>
            <person name="Azevedo R.V."/>
            <person name="Hayward C."/>
            <person name="van Mill J."/>
            <person name="Vogelzangs N."/>
            <person name="Green E.W."/>
            <person name="Melville S.A."/>
            <person name="Lichtner P."/>
            <person name="Wichmann H.E."/>
            <person name="Oostra B.A."/>
            <person name="Janssens A.C."/>
            <person name="Campbell H."/>
            <person name="Wilson J.F."/>
            <person name="Hicks A.A."/>
            <person name="Pramstaller P.P."/>
            <person name="Dogas Z."/>
            <person name="Rudan I."/>
            <person name="Merrow M."/>
            <person name="Penninx B."/>
            <person name="Kyriacou C.P."/>
            <person name="Metspalu A."/>
            <person name="van Duijn C.M."/>
            <person name="Meitinger T."/>
            <person name="Roenneberg T."/>
        </authorList>
    </citation>
    <scope>POSSIBLE FUNCTION IN REGULATION OF SLEEP PATTERN</scope>
</reference>
<sequence length="2171" mass="242375">MKQLFNIIHCDHLNGHVRSIYDNLNTDICGIDRVRRVFTFFSIFLLLFGLMFVCSRYKKCHKTLLTFHNGRAAISLLLLALNSFDLARIFLPHQNVRNLNRLFQSSPRDLNYLVVIGSGELWNALFSTLLTLMLMLYHRMVERKKATVFLYASTAVEALTFALLSNELFELVRYEDFLELQTCLVAMSAMCMVSLAMLDGLTVYKECYHDDYLDDYGKIGYKHSMATFYSKSCFWWLTPLLWLGYKEPLELEDLGQMKLEDSARSHYDHFLYIYTEKKKKSNSSPSLWYCYIKNSWQMFALGGILKLAGDLFALIGPLAIQKIVEYIEQLYAQASEPPAKSPGNEVANVLLSTSRILGTEFDEVFGTNIDKGLIYRKSLLLNADGGCDSSDSAGQVQSTSSTSDEKQKNDDSMATPEHVDNPSEPNISHDIGSITNHMTEDTRNIMEFFLIIHYAWAIPFKIAVVIYLLYMNLGISAVIGSIACIVIMTPLQFFIGNAMSKNAEVIAGYTDERLKRIHDTLVGIKVIKLNAWDEVFLKKIQEARRKELKYLNKDATFWTLMAVLTHIATVLITFVTLGVYVWLHRDQEFDLNASRLFSSLALFQQLTVPLLIFPITVPIIIAARVSTRRLERFLKSSEIQKQFEGIRNMARILSKSDASLDMYETQEKSNMTMRTAQAENRLNEKRLAQKSQTPELATNSTPLLQNAEESAEDISPSTVQELGHNKLVQQRRELLRNTPYVAIRPPKMRGSVMERPVEFSVIRARNTDSWRRDSLLLKMPDDIAVSINDGLFTWQPQSQMPVVQLHVPGIIVPKGKLTIVVGKNGSGKTSLLSALLMEMPLLAGNMFWHKTCTISYVSQQPWLLNDTIRENILFGESFRPKRYDFVLEACALKPDIELMPRGDLSIIGERGINISGGQRQRIAIARAIYSSANVVIMDDPLASLDNEVGEHIFQHCIREMLQKSNRTFILVTQQLHRIKEAEYLIAIKDGRVEACGSYADIELMQPRITAEWNAIIAMAKAKNDNPSQNPGEKTAGERWKLLKNVSKLGLQRSISVTMDANVACHADAIDGSGCISVANMQSNVVEEDDQVSVSYPIGNASCGGFNLQRKRSSIYGSRHLMYDVPLPIDECQGDDVIMRPRRRHTLGRRGSRNTNSSHRLSGLSTLTATSESSSISGDVLSRSVLATSCSSYAESSVDGGDLATAAPEPRVQSWQPPQHVTHHQPLSRNASSPPAMEVANPDVKKSEEARRSNTSSESPLDDHVRGSFQQFLRRMSMRRSNKPKNHHHPLSATNSILSISEESPPVVHFPASILATDGNKNETQSEEKPKKCVNIDSKETTINCDDNCYSASDKELRANVTSSPADQEQHNERHVLAEVAGESGRESMPLARLAIDTERKYGKISDDIYLMYIRAAGLPIITIFFITALIWQCLRVYTDIWLQQWSNVHGRVASKGHVVLHPSEQDHEVTYYFRMYAAISCVCIIMALVSTPAGQYAGCNARRNLHDKLLQTILHKTLHFFQVTPLGRIVNRFSNDMAVIDKKIAATGQRLLQFTLLCLSAILINVTITPWILVLTLPICGAYYLIQKFYRCSARELQRIENATNSPVISHLSETIQGVTTIRAFNQQTRFTEILFKRLEANTIAYALLNTSHRWLGVSLDYLGGCIVFVATVTALTAASVSCRRHYEATTSPSASASPSPFETYAVTKSPSELRPSPSLVGLAINYTLLVPIYLNWVVKLLADMEMYAGSVERIAHYAQGQDADADADADADADVDADLDHEPSSNEDVSAEVDRSSQSDAGDKVYPGATTAAGDVDEDGDQQRIGGARGGGGDCGYRQGHENGAEANADKLNAGNVTGDGNHLNFHHPPATAGDKVEQATTKTSVIKDKQLPPQQDDKDKKVVLPNEPARKLERYQSVPISWPQRGDIHFDNVSLRYEGQKQNVISNLTLKIPAGQRIGICGRTGSGKSSLGLSLFGVLQTTRGHIYIDDVDIQRIRPDELRTRLSIIPQDVHLFNATIRENLDPHGYFQDLQLWNCLELAQLKEFVNGHLPLGLDTVICDGGLNLSAGHRQLLCLARAILRGSVCLVLDEATSVLDSSTESALLKAADLAFRGRTIITIAHRLTTILDYDRLIVLDQGRIVEDGNPRELQQLEGSVFRGLLEKGASKW</sequence>
<proteinExistence type="evidence at protein level"/>
<keyword id="KW-0067">ATP-binding</keyword>
<keyword id="KW-0378">Hydrolase</keyword>
<keyword id="KW-0472">Membrane</keyword>
<keyword id="KW-0547">Nucleotide-binding</keyword>
<keyword id="KW-0675">Receptor</keyword>
<keyword id="KW-1185">Reference proteome</keyword>
<keyword id="KW-0677">Repeat</keyword>
<keyword id="KW-0812">Transmembrane</keyword>
<keyword id="KW-1133">Transmembrane helix</keyword>
<keyword id="KW-0813">Transport</keyword>
<feature type="chain" id="PRO_0000415415" description="ATP-binding cassette sub-family C member Sur">
    <location>
        <begin position="1"/>
        <end position="2171"/>
    </location>
</feature>
<feature type="topological domain" description="Extracellular" evidence="2">
    <location>
        <begin position="1"/>
        <end position="36"/>
    </location>
</feature>
<feature type="transmembrane region" description="Helical; Name=1" evidence="4">
    <location>
        <begin position="37"/>
        <end position="57"/>
    </location>
</feature>
<feature type="topological domain" description="Cytoplasmic" evidence="2">
    <location>
        <begin position="58"/>
        <end position="71"/>
    </location>
</feature>
<feature type="transmembrane region" description="Helical; Name=2" evidence="4">
    <location>
        <begin position="72"/>
        <end position="92"/>
    </location>
</feature>
<feature type="topological domain" description="Extracellular" evidence="2">
    <location>
        <begin position="93"/>
        <end position="112"/>
    </location>
</feature>
<feature type="transmembrane region" description="Helical; Name=3" evidence="4">
    <location>
        <begin position="113"/>
        <end position="133"/>
    </location>
</feature>
<feature type="topological domain" description="Cytoplasmic" evidence="2">
    <location>
        <begin position="134"/>
        <end position="145"/>
    </location>
</feature>
<feature type="transmembrane region" description="Helical; Name=4" evidence="4">
    <location>
        <begin position="146"/>
        <end position="166"/>
    </location>
</feature>
<feature type="topological domain" description="Extracellular" evidence="2">
    <location>
        <begin position="167"/>
        <end position="182"/>
    </location>
</feature>
<feature type="transmembrane region" description="Helical; Name=5" evidence="4">
    <location>
        <begin position="183"/>
        <end position="203"/>
    </location>
</feature>
<feature type="topological domain" description="Cytoplasmic" evidence="2">
    <location>
        <begin position="204"/>
        <end position="224"/>
    </location>
</feature>
<feature type="transmembrane region" description="Helical; Name=6" evidence="4">
    <location>
        <begin position="225"/>
        <end position="245"/>
    </location>
</feature>
<feature type="topological domain" description="Extracellular" evidence="2">
    <location>
        <begin position="246"/>
        <end position="299"/>
    </location>
</feature>
<feature type="transmembrane region" description="Helical; Name=7" evidence="4">
    <location>
        <begin position="300"/>
        <end position="320"/>
    </location>
</feature>
<feature type="topological domain" description="Cytoplasmic" evidence="2">
    <location>
        <begin position="321"/>
        <end position="447"/>
    </location>
</feature>
<feature type="transmembrane region" description="Helical; Name=8" evidence="4">
    <location>
        <begin position="448"/>
        <end position="468"/>
    </location>
</feature>
<feature type="topological domain" description="Extracellular" evidence="2">
    <location>
        <begin position="469"/>
        <end position="474"/>
    </location>
</feature>
<feature type="transmembrane region" description="Helical; Name=9" evidence="4">
    <location>
        <begin position="475"/>
        <end position="495"/>
    </location>
</feature>
<feature type="topological domain" description="Cytoplasmic" evidence="2">
    <location>
        <begin position="496"/>
        <end position="562"/>
    </location>
</feature>
<feature type="transmembrane region" description="Helical; Name=10" evidence="4">
    <location>
        <begin position="563"/>
        <end position="583"/>
    </location>
</feature>
<feature type="topological domain" description="Extracellular" evidence="2">
    <location>
        <begin position="584"/>
        <end position="600"/>
    </location>
</feature>
<feature type="transmembrane region" description="Helical; Name=11" evidence="4">
    <location>
        <begin position="601"/>
        <end position="621"/>
    </location>
</feature>
<feature type="topological domain" description="Cytoplasmic" evidence="2">
    <location>
        <begin position="622"/>
        <end position="1409"/>
    </location>
</feature>
<feature type="transmembrane region" description="Helical; Name=12" evidence="4">
    <location>
        <begin position="1410"/>
        <end position="1430"/>
    </location>
</feature>
<feature type="topological domain" description="Extracellular" evidence="2">
    <location>
        <begin position="1431"/>
        <end position="1468"/>
    </location>
</feature>
<feature type="transmembrane region" description="Helical; Name=13" evidence="4">
    <location>
        <begin position="1469"/>
        <end position="1489"/>
    </location>
</feature>
<feature type="topological domain" description="Cytoplasmic" evidence="2">
    <location>
        <begin position="1490"/>
        <end position="1558"/>
    </location>
</feature>
<feature type="transmembrane region" description="Helical; Name=14" evidence="4">
    <location>
        <begin position="1559"/>
        <end position="1579"/>
    </location>
</feature>
<feature type="topological domain" description="Extracellular" evidence="2">
    <location>
        <begin position="1580"/>
        <end position="1655"/>
    </location>
</feature>
<feature type="transmembrane region" description="Helical; Name=15" evidence="4">
    <location>
        <begin position="1656"/>
        <end position="1676"/>
    </location>
</feature>
<feature type="topological domain" description="Cytoplasmic" evidence="2">
    <location>
        <begin position="1677"/>
        <end position="1718"/>
    </location>
</feature>
<feature type="transmembrane region" description="Helical; Name=16" evidence="4">
    <location>
        <begin position="1719"/>
        <end position="1739"/>
    </location>
</feature>
<feature type="topological domain" description="Extracellular" evidence="2">
    <location>
        <begin position="1740"/>
        <end position="2171"/>
    </location>
</feature>
<feature type="domain" description="ABC transmembrane type-1 1" evidence="4">
    <location>
        <begin position="344"/>
        <end position="622"/>
    </location>
</feature>
<feature type="domain" description="ABC transporter 1" evidence="3">
    <location>
        <begin position="785"/>
        <end position="1014"/>
    </location>
</feature>
<feature type="domain" description="ABC transmembrane type-1 2" evidence="4">
    <location>
        <begin position="1421"/>
        <end position="1715"/>
    </location>
</feature>
<feature type="domain" description="ABC transporter 2" evidence="3">
    <location>
        <begin position="1930"/>
        <end position="2165"/>
    </location>
</feature>
<feature type="region of interest" description="Disordered" evidence="5">
    <location>
        <begin position="388"/>
        <end position="434"/>
    </location>
</feature>
<feature type="region of interest" description="Disordered" evidence="5">
    <location>
        <begin position="1141"/>
        <end position="1177"/>
    </location>
</feature>
<feature type="region of interest" description="Disordered" evidence="5">
    <location>
        <begin position="1209"/>
        <end position="1265"/>
    </location>
</feature>
<feature type="region of interest" description="Disordered" evidence="5">
    <location>
        <begin position="1766"/>
        <end position="1844"/>
    </location>
</feature>
<feature type="region of interest" description="Disordered" evidence="5">
    <location>
        <begin position="1866"/>
        <end position="1902"/>
    </location>
</feature>
<feature type="compositionally biased region" description="Polar residues" evidence="5">
    <location>
        <begin position="389"/>
        <end position="402"/>
    </location>
</feature>
<feature type="compositionally biased region" description="Basic and acidic residues" evidence="5">
    <location>
        <begin position="403"/>
        <end position="421"/>
    </location>
</feature>
<feature type="compositionally biased region" description="Basic residues" evidence="5">
    <location>
        <begin position="1141"/>
        <end position="1151"/>
    </location>
</feature>
<feature type="compositionally biased region" description="Low complexity" evidence="5">
    <location>
        <begin position="1160"/>
        <end position="1176"/>
    </location>
</feature>
<feature type="compositionally biased region" description="Polar residues" evidence="5">
    <location>
        <begin position="1212"/>
        <end position="1232"/>
    </location>
</feature>
<feature type="compositionally biased region" description="Basic and acidic residues" evidence="5">
    <location>
        <begin position="1242"/>
        <end position="1251"/>
    </location>
</feature>
<feature type="compositionally biased region" description="Acidic residues" evidence="5">
    <location>
        <begin position="1766"/>
        <end position="1778"/>
    </location>
</feature>
<feature type="compositionally biased region" description="Basic and acidic residues" evidence="5">
    <location>
        <begin position="1793"/>
        <end position="1804"/>
    </location>
</feature>
<feature type="compositionally biased region" description="Basic and acidic residues" evidence="5">
    <location>
        <begin position="1887"/>
        <end position="1902"/>
    </location>
</feature>
<feature type="binding site" evidence="3">
    <location>
        <begin position="822"/>
        <end position="829"/>
    </location>
    <ligand>
        <name>ATP</name>
        <dbReference type="ChEBI" id="CHEBI:30616"/>
        <label>1</label>
    </ligand>
</feature>
<feature type="binding site" evidence="3">
    <location>
        <begin position="1964"/>
        <end position="1971"/>
    </location>
    <ligand>
        <name>ATP</name>
        <dbReference type="ChEBI" id="CHEBI:30616"/>
        <label>2</label>
    </ligand>
</feature>
<feature type="sequence conflict" description="In Ref. 1; AAF06736." evidence="8" ref="1">
    <original>VR</original>
    <variation>CA</variation>
    <location>
        <begin position="34"/>
        <end position="35"/>
    </location>
</feature>
<feature type="sequence conflict" description="In Ref. 1; AAF06736." evidence="8" ref="1">
    <original>C</original>
    <variation>Y</variation>
    <location>
        <position position="54"/>
    </location>
</feature>
<feature type="sequence conflict" description="In Ref. 1; AAF06736." evidence="8" ref="1">
    <original>L</original>
    <variation>I</variation>
    <location>
        <position position="77"/>
    </location>
</feature>
<feature type="sequence conflict" description="In Ref. 1; AAF06736." evidence="8" ref="1">
    <original>D</original>
    <variation>E</variation>
    <location>
        <position position="85"/>
    </location>
</feature>
<feature type="sequence conflict" description="In Ref. 1; AAF06736." evidence="8" ref="1">
    <original>M</original>
    <variation>V</variation>
    <location>
        <position position="413"/>
    </location>
</feature>
<feature type="sequence conflict" description="In Ref. 1; AAF06736." evidence="8" ref="1">
    <original>S</original>
    <variation>G</variation>
    <location>
        <position position="433"/>
    </location>
</feature>
<feature type="sequence conflict" description="In Ref. 1; AAF06736." evidence="8" ref="1">
    <original>N</original>
    <variation>S</variation>
    <location>
        <position position="444"/>
    </location>
</feature>
<feature type="sequence conflict" description="In Ref. 1; AAF06736." evidence="8" ref="1">
    <original>R</original>
    <variation>G</variation>
    <location>
        <position position="731"/>
    </location>
</feature>
<feature type="sequence conflict" description="In Ref. 1; AAF06736." evidence="8" ref="1">
    <original>K</original>
    <variation>E</variation>
    <location>
        <position position="1022"/>
    </location>
</feature>
<feature type="sequence conflict" description="In Ref. 1; AAF06736." evidence="8" ref="1">
    <original>A</original>
    <variation>T</variation>
    <location>
        <position position="1603"/>
    </location>
</feature>
<feature type="sequence conflict" description="In Ref. 1; AAF06736." evidence="8" ref="1">
    <original>H</original>
    <variation>Q</variation>
    <location>
        <position position="1757"/>
    </location>
</feature>
<feature type="sequence conflict" description="In Ref. 1; AAF06736." evidence="8" ref="1">
    <location>
        <begin position="1763"/>
        <end position="1766"/>
    </location>
</feature>
<feature type="sequence conflict" description="In Ref. 1; AAF06736." evidence="8" ref="1">
    <original>A</original>
    <variation>T</variation>
    <location>
        <position position="1772"/>
    </location>
</feature>
<accession>Q9VL32</accession>
<accession>Q9U6Z2</accession>
<comment type="function">
    <text evidence="1 6 7">May function as regulatory subunit of ATP-sensitive potassium channels (KATP) and form KATP channels with a member of the ATP-sensitive inward rectifier potassium channel family (By similarity). May also have channel activity by itself (in vitro). May protect the heart during hypoxia. May protect against heart failure under conditions of tachycardic stress.</text>
</comment>
<comment type="subcellular location">
    <subcellularLocation>
        <location evidence="8">Membrane</location>
        <topology evidence="8">Multi-pass membrane protein</topology>
    </subcellularLocation>
</comment>
<comment type="tissue specificity">
    <text evidence="7">Highly expressed in adult heart. Detected at lower levels in head and abdomen.</text>
</comment>
<comment type="developmental stage">
    <text evidence="6 7">Detected in embryonic myocardial cells and in the developing heart tube. Detected in embryonic dorsal vessels and tracheal system.</text>
</comment>
<comment type="miscellaneous">
    <text evidence="9">Drosophila is predominantly active around dawn and dusk, and has large sleep periods during the day and during night. Knockdown of Sur reduces sleep duration during the first half of the night, but has little effect on sleep during the day (PubMed:22105623).</text>
</comment>
<comment type="similarity">
    <text evidence="8">Belongs to the ABC transporter superfamily. ABCC family. Conjugate transporter (TC 3.A.1.208) subfamily.</text>
</comment>
<comment type="sequence caution" evidence="8">
    <conflict type="erroneous initiation">
        <sequence resource="EMBL-CDS" id="AAF06736"/>
    </conflict>
    <text>Extended N-terminus.</text>
</comment>
<comment type="online information" name="Protein Spotlight">
    <link uri="https://www.proteinspotlight.org/back_issues/139"/>
    <text>On The Other Side - Issue 139 of June 2012</text>
</comment>
<evidence type="ECO:0000250" key="1"/>
<evidence type="ECO:0000255" key="2"/>
<evidence type="ECO:0000255" key="3">
    <source>
        <dbReference type="PROSITE-ProRule" id="PRU00434"/>
    </source>
</evidence>
<evidence type="ECO:0000255" key="4">
    <source>
        <dbReference type="PROSITE-ProRule" id="PRU00441"/>
    </source>
</evidence>
<evidence type="ECO:0000256" key="5">
    <source>
        <dbReference type="SAM" id="MobiDB-lite"/>
    </source>
</evidence>
<evidence type="ECO:0000269" key="6">
    <source>
    </source>
</evidence>
<evidence type="ECO:0000269" key="7">
    <source>
    </source>
</evidence>
<evidence type="ECO:0000305" key="8"/>
<evidence type="ECO:0000305" key="9">
    <source>
    </source>
</evidence>
<dbReference type="EMBL" id="AF167431">
    <property type="protein sequence ID" value="AAF06736.1"/>
    <property type="status" value="ALT_INIT"/>
    <property type="molecule type" value="mRNA"/>
</dbReference>
<dbReference type="EMBL" id="AE014134">
    <property type="protein sequence ID" value="AAF52866.4"/>
    <property type="molecule type" value="Genomic_DNA"/>
</dbReference>
<dbReference type="BioGRID" id="60441">
    <property type="interactions" value="1"/>
</dbReference>
<dbReference type="IntAct" id="Q9VL32">
    <property type="interactions" value="3"/>
</dbReference>
<dbReference type="STRING" id="7227.FBpp0402894"/>
<dbReference type="PaxDb" id="7227-FBpp0288707"/>
<dbReference type="AGR" id="FB:FBgn0028675"/>
<dbReference type="FlyBase" id="FBgn0028675">
    <property type="gene designation" value="Sur"/>
</dbReference>
<dbReference type="VEuPathDB" id="VectorBase:FBgn0028675"/>
<dbReference type="eggNOG" id="KOG0054">
    <property type="taxonomic scope" value="Eukaryota"/>
</dbReference>
<dbReference type="HOGENOM" id="CLU_000604_27_8_1"/>
<dbReference type="InParanoid" id="Q9VL32"/>
<dbReference type="OrthoDB" id="6500128at2759"/>
<dbReference type="PhylomeDB" id="Q9VL32"/>
<dbReference type="Reactome" id="R-DME-1296025">
    <property type="pathway name" value="ATP sensitive Potassium channels"/>
</dbReference>
<dbReference type="Reactome" id="R-DME-382556">
    <property type="pathway name" value="ABC-family proteins mediated transport"/>
</dbReference>
<dbReference type="Reactome" id="R-DME-422356">
    <property type="pathway name" value="Regulation of insulin secretion"/>
</dbReference>
<dbReference type="Reactome" id="R-DME-5578775">
    <property type="pathway name" value="Ion homeostasis"/>
</dbReference>
<dbReference type="SignaLink" id="Q9VL32"/>
<dbReference type="ChiTaRS" id="Sur">
    <property type="organism name" value="fly"/>
</dbReference>
<dbReference type="PRO" id="PR:Q9VL32"/>
<dbReference type="Proteomes" id="UP000000803">
    <property type="component" value="Chromosome 2L"/>
</dbReference>
<dbReference type="ExpressionAtlas" id="Q9VL32">
    <property type="expression patterns" value="baseline and differential"/>
</dbReference>
<dbReference type="GO" id="GO:0016020">
    <property type="term" value="C:membrane"/>
    <property type="evidence" value="ECO:0000318"/>
    <property type="project" value="GO_Central"/>
</dbReference>
<dbReference type="GO" id="GO:0140359">
    <property type="term" value="F:ABC-type transporter activity"/>
    <property type="evidence" value="ECO:0007669"/>
    <property type="project" value="InterPro"/>
</dbReference>
<dbReference type="GO" id="GO:0005524">
    <property type="term" value="F:ATP binding"/>
    <property type="evidence" value="ECO:0007669"/>
    <property type="project" value="UniProtKB-KW"/>
</dbReference>
<dbReference type="GO" id="GO:0016887">
    <property type="term" value="F:ATP hydrolysis activity"/>
    <property type="evidence" value="ECO:0007669"/>
    <property type="project" value="InterPro"/>
</dbReference>
<dbReference type="GO" id="GO:0042626">
    <property type="term" value="F:ATPase-coupled transmembrane transporter activity"/>
    <property type="evidence" value="ECO:0000318"/>
    <property type="project" value="GO_Central"/>
</dbReference>
<dbReference type="GO" id="GO:0001666">
    <property type="term" value="P:response to hypoxia"/>
    <property type="evidence" value="ECO:0000315"/>
    <property type="project" value="FlyBase"/>
</dbReference>
<dbReference type="GO" id="GO:0055085">
    <property type="term" value="P:transmembrane transport"/>
    <property type="evidence" value="ECO:0000318"/>
    <property type="project" value="GO_Central"/>
</dbReference>
<dbReference type="CDD" id="cd18591">
    <property type="entry name" value="ABC_6TM_SUR1_D1_like"/>
    <property type="match status" value="1"/>
</dbReference>
<dbReference type="CDD" id="cd18602">
    <property type="entry name" value="ABC_6TM_SUR1_D2_like"/>
    <property type="match status" value="1"/>
</dbReference>
<dbReference type="CDD" id="cd03250">
    <property type="entry name" value="ABCC_MRP_domain1"/>
    <property type="match status" value="1"/>
</dbReference>
<dbReference type="CDD" id="cd03244">
    <property type="entry name" value="ABCC_MRP_domain2"/>
    <property type="match status" value="1"/>
</dbReference>
<dbReference type="FunFam" id="3.40.50.300:FF:000838">
    <property type="entry name" value="ABC multidrug transporter (Eurofung)"/>
    <property type="match status" value="1"/>
</dbReference>
<dbReference type="FunFam" id="3.40.50.300:FF:002459">
    <property type="entry name" value="Uncharacterized protein, isoform C"/>
    <property type="match status" value="1"/>
</dbReference>
<dbReference type="Gene3D" id="1.20.1560.10">
    <property type="entry name" value="ABC transporter type 1, transmembrane domain"/>
    <property type="match status" value="2"/>
</dbReference>
<dbReference type="Gene3D" id="3.40.50.300">
    <property type="entry name" value="P-loop containing nucleotide triphosphate hydrolases"/>
    <property type="match status" value="2"/>
</dbReference>
<dbReference type="InterPro" id="IPR003593">
    <property type="entry name" value="AAA+_ATPase"/>
</dbReference>
<dbReference type="InterPro" id="IPR011527">
    <property type="entry name" value="ABC1_TM_dom"/>
</dbReference>
<dbReference type="InterPro" id="IPR036640">
    <property type="entry name" value="ABC1_TM_sf"/>
</dbReference>
<dbReference type="InterPro" id="IPR003439">
    <property type="entry name" value="ABC_transporter-like_ATP-bd"/>
</dbReference>
<dbReference type="InterPro" id="IPR017871">
    <property type="entry name" value="ABC_transporter-like_CS"/>
</dbReference>
<dbReference type="InterPro" id="IPR050173">
    <property type="entry name" value="ABC_transporter_C-like"/>
</dbReference>
<dbReference type="InterPro" id="IPR027417">
    <property type="entry name" value="P-loop_NTPase"/>
</dbReference>
<dbReference type="PANTHER" id="PTHR24223">
    <property type="entry name" value="ATP-BINDING CASSETTE SUB-FAMILY C"/>
    <property type="match status" value="1"/>
</dbReference>
<dbReference type="PANTHER" id="PTHR24223:SF461">
    <property type="entry name" value="ATP-BINDING CASSETTE SUB-FAMILY C MEMBER SUR"/>
    <property type="match status" value="1"/>
</dbReference>
<dbReference type="Pfam" id="PF00664">
    <property type="entry name" value="ABC_membrane"/>
    <property type="match status" value="2"/>
</dbReference>
<dbReference type="Pfam" id="PF00005">
    <property type="entry name" value="ABC_tran"/>
    <property type="match status" value="2"/>
</dbReference>
<dbReference type="SMART" id="SM00382">
    <property type="entry name" value="AAA"/>
    <property type="match status" value="2"/>
</dbReference>
<dbReference type="SUPFAM" id="SSF90123">
    <property type="entry name" value="ABC transporter transmembrane region"/>
    <property type="match status" value="2"/>
</dbReference>
<dbReference type="SUPFAM" id="SSF52540">
    <property type="entry name" value="P-loop containing nucleoside triphosphate hydrolases"/>
    <property type="match status" value="2"/>
</dbReference>
<dbReference type="PROSITE" id="PS50929">
    <property type="entry name" value="ABC_TM1F"/>
    <property type="match status" value="2"/>
</dbReference>
<dbReference type="PROSITE" id="PS00211">
    <property type="entry name" value="ABC_TRANSPORTER_1"/>
    <property type="match status" value="1"/>
</dbReference>
<dbReference type="PROSITE" id="PS50893">
    <property type="entry name" value="ABC_TRANSPORTER_2"/>
    <property type="match status" value="2"/>
</dbReference>
<name>SUR_DROME</name>
<protein>
    <recommendedName>
        <fullName>ATP-binding cassette sub-family C member Sur</fullName>
    </recommendedName>
    <alternativeName>
        <fullName>Sulfonylurea receptor</fullName>
        <shortName>Dsur</shortName>
    </alternativeName>
</protein>
<gene>
    <name type="primary">Sur</name>
    <name type="ORF">CG5772</name>
</gene>
<organism>
    <name type="scientific">Drosophila melanogaster</name>
    <name type="common">Fruit fly</name>
    <dbReference type="NCBI Taxonomy" id="7227"/>
    <lineage>
        <taxon>Eukaryota</taxon>
        <taxon>Metazoa</taxon>
        <taxon>Ecdysozoa</taxon>
        <taxon>Arthropoda</taxon>
        <taxon>Hexapoda</taxon>
        <taxon>Insecta</taxon>
        <taxon>Pterygota</taxon>
        <taxon>Neoptera</taxon>
        <taxon>Endopterygota</taxon>
        <taxon>Diptera</taxon>
        <taxon>Brachycera</taxon>
        <taxon>Muscomorpha</taxon>
        <taxon>Ephydroidea</taxon>
        <taxon>Drosophilidae</taxon>
        <taxon>Drosophila</taxon>
        <taxon>Sophophora</taxon>
    </lineage>
</organism>